<gene>
    <name evidence="1" type="primary">xseB</name>
    <name type="ordered locus">Lm4b_01370</name>
</gene>
<keyword id="KW-0963">Cytoplasm</keyword>
<keyword id="KW-0269">Exonuclease</keyword>
<keyword id="KW-0378">Hydrolase</keyword>
<keyword id="KW-0540">Nuclease</keyword>
<feature type="chain" id="PRO_1000205228" description="Exodeoxyribonuclease 7 small subunit">
    <location>
        <begin position="1"/>
        <end position="75"/>
    </location>
</feature>
<evidence type="ECO:0000255" key="1">
    <source>
        <dbReference type="HAMAP-Rule" id="MF_00337"/>
    </source>
</evidence>
<name>EX7S_LISMC</name>
<dbReference type="EC" id="3.1.11.6" evidence="1"/>
<dbReference type="EMBL" id="FM242711">
    <property type="protein sequence ID" value="CAS05134.1"/>
    <property type="molecule type" value="Genomic_DNA"/>
</dbReference>
<dbReference type="RefSeq" id="WP_003722489.1">
    <property type="nucleotide sequence ID" value="NC_012488.1"/>
</dbReference>
<dbReference type="SMR" id="C1L2R8"/>
<dbReference type="KEGG" id="lmc:Lm4b_01370"/>
<dbReference type="HOGENOM" id="CLU_145918_3_1_9"/>
<dbReference type="GO" id="GO:0005829">
    <property type="term" value="C:cytosol"/>
    <property type="evidence" value="ECO:0007669"/>
    <property type="project" value="TreeGrafter"/>
</dbReference>
<dbReference type="GO" id="GO:0009318">
    <property type="term" value="C:exodeoxyribonuclease VII complex"/>
    <property type="evidence" value="ECO:0007669"/>
    <property type="project" value="InterPro"/>
</dbReference>
<dbReference type="GO" id="GO:0008855">
    <property type="term" value="F:exodeoxyribonuclease VII activity"/>
    <property type="evidence" value="ECO:0007669"/>
    <property type="project" value="UniProtKB-UniRule"/>
</dbReference>
<dbReference type="GO" id="GO:0006308">
    <property type="term" value="P:DNA catabolic process"/>
    <property type="evidence" value="ECO:0007669"/>
    <property type="project" value="UniProtKB-UniRule"/>
</dbReference>
<dbReference type="FunFam" id="1.10.287.1040:FF:000008">
    <property type="entry name" value="Exodeoxyribonuclease 7 small subunit"/>
    <property type="match status" value="1"/>
</dbReference>
<dbReference type="Gene3D" id="1.10.287.1040">
    <property type="entry name" value="Exonuclease VII, small subunit"/>
    <property type="match status" value="1"/>
</dbReference>
<dbReference type="HAMAP" id="MF_00337">
    <property type="entry name" value="Exonuc_7_S"/>
    <property type="match status" value="1"/>
</dbReference>
<dbReference type="InterPro" id="IPR003761">
    <property type="entry name" value="Exonuc_VII_S"/>
</dbReference>
<dbReference type="InterPro" id="IPR037004">
    <property type="entry name" value="Exonuc_VII_ssu_sf"/>
</dbReference>
<dbReference type="NCBIfam" id="NF002138">
    <property type="entry name" value="PRK00977.1-2"/>
    <property type="match status" value="1"/>
</dbReference>
<dbReference type="NCBIfam" id="NF002139">
    <property type="entry name" value="PRK00977.1-3"/>
    <property type="match status" value="1"/>
</dbReference>
<dbReference type="NCBIfam" id="NF002140">
    <property type="entry name" value="PRK00977.1-4"/>
    <property type="match status" value="1"/>
</dbReference>
<dbReference type="NCBIfam" id="NF010667">
    <property type="entry name" value="PRK14064.1"/>
    <property type="match status" value="1"/>
</dbReference>
<dbReference type="NCBIfam" id="TIGR01280">
    <property type="entry name" value="xseB"/>
    <property type="match status" value="1"/>
</dbReference>
<dbReference type="PANTHER" id="PTHR34137">
    <property type="entry name" value="EXODEOXYRIBONUCLEASE 7 SMALL SUBUNIT"/>
    <property type="match status" value="1"/>
</dbReference>
<dbReference type="PANTHER" id="PTHR34137:SF1">
    <property type="entry name" value="EXODEOXYRIBONUCLEASE 7 SMALL SUBUNIT"/>
    <property type="match status" value="1"/>
</dbReference>
<dbReference type="Pfam" id="PF02609">
    <property type="entry name" value="Exonuc_VII_S"/>
    <property type="match status" value="1"/>
</dbReference>
<dbReference type="PIRSF" id="PIRSF006488">
    <property type="entry name" value="Exonuc_VII_S"/>
    <property type="match status" value="1"/>
</dbReference>
<dbReference type="SUPFAM" id="SSF116842">
    <property type="entry name" value="XseB-like"/>
    <property type="match status" value="1"/>
</dbReference>
<accession>C1L2R8</accession>
<protein>
    <recommendedName>
        <fullName evidence="1">Exodeoxyribonuclease 7 small subunit</fullName>
        <ecNumber evidence="1">3.1.11.6</ecNumber>
    </recommendedName>
    <alternativeName>
        <fullName evidence="1">Exodeoxyribonuclease VII small subunit</fullName>
        <shortName evidence="1">Exonuclease VII small subunit</shortName>
    </alternativeName>
</protein>
<reference key="1">
    <citation type="journal article" date="2012" name="BMC Genomics">
        <title>Comparative genomics and transcriptomics of lineages I, II, and III strains of Listeria monocytogenes.</title>
        <authorList>
            <person name="Hain T."/>
            <person name="Ghai R."/>
            <person name="Billion A."/>
            <person name="Kuenne C.T."/>
            <person name="Steinweg C."/>
            <person name="Izar B."/>
            <person name="Mohamed W."/>
            <person name="Mraheil M."/>
            <person name="Domann E."/>
            <person name="Schaffrath S."/>
            <person name="Karst U."/>
            <person name="Goesmann A."/>
            <person name="Oehm S."/>
            <person name="Puhler A."/>
            <person name="Merkl R."/>
            <person name="Vorwerk S."/>
            <person name="Glaser P."/>
            <person name="Garrido P."/>
            <person name="Rusniok C."/>
            <person name="Buchrieser C."/>
            <person name="Goebel W."/>
            <person name="Chakraborty T."/>
        </authorList>
    </citation>
    <scope>NUCLEOTIDE SEQUENCE [LARGE SCALE GENOMIC DNA]</scope>
    <source>
        <strain>CLIP80459</strain>
    </source>
</reference>
<comment type="function">
    <text evidence="1">Bidirectionally degrades single-stranded DNA into large acid-insoluble oligonucleotides, which are then degraded further into small acid-soluble oligonucleotides.</text>
</comment>
<comment type="catalytic activity">
    <reaction evidence="1">
        <text>Exonucleolytic cleavage in either 5'- to 3'- or 3'- to 5'-direction to yield nucleoside 5'-phosphates.</text>
        <dbReference type="EC" id="3.1.11.6"/>
    </reaction>
</comment>
<comment type="subunit">
    <text evidence="1">Heterooligomer composed of large and small subunits.</text>
</comment>
<comment type="subcellular location">
    <subcellularLocation>
        <location evidence="1">Cytoplasm</location>
    </subcellularLocation>
</comment>
<comment type="similarity">
    <text evidence="1">Belongs to the XseB family.</text>
</comment>
<sequence length="75" mass="8267">MATKKKTFEEAIAELETIVEALENGSASLEDSLDMYQKGIELTKLCQDKLQSAEKRMAKVVTDAGEEIPFEADGE</sequence>
<organism>
    <name type="scientific">Listeria monocytogenes serotype 4b (strain CLIP80459)</name>
    <dbReference type="NCBI Taxonomy" id="568819"/>
    <lineage>
        <taxon>Bacteria</taxon>
        <taxon>Bacillati</taxon>
        <taxon>Bacillota</taxon>
        <taxon>Bacilli</taxon>
        <taxon>Bacillales</taxon>
        <taxon>Listeriaceae</taxon>
        <taxon>Listeria</taxon>
    </lineage>
</organism>
<proteinExistence type="inferred from homology"/>